<feature type="transit peptide" description="Mitochondrion" evidence="3">
    <location>
        <begin position="1"/>
        <end position="37"/>
    </location>
</feature>
<feature type="chain" id="PRO_0000399097" description="Glycine amidinotransferase, mitochondrial" evidence="3">
    <location>
        <begin position="38"/>
        <end position="422"/>
    </location>
</feature>
<feature type="active site" evidence="2">
    <location>
        <position position="253"/>
    </location>
</feature>
<feature type="active site" evidence="2">
    <location>
        <position position="302"/>
    </location>
</feature>
<feature type="active site" description="Amidino-cysteine intermediate" evidence="2">
    <location>
        <position position="406"/>
    </location>
</feature>
<gene>
    <name evidence="10" type="primary">gatm</name>
</gene>
<name>GATM_XENLA</name>
<keyword id="KW-0472">Membrane</keyword>
<keyword id="KW-0496">Mitochondrion</keyword>
<keyword id="KW-0999">Mitochondrion inner membrane</keyword>
<keyword id="KW-1185">Reference proteome</keyword>
<keyword id="KW-0808">Transferase</keyword>
<keyword id="KW-0809">Transit peptide</keyword>
<protein>
    <recommendedName>
        <fullName evidence="2">Glycine amidinotransferase, mitochondrial</fullName>
        <ecNumber evidence="2">2.1.4.1</ecNumber>
    </recommendedName>
    <alternativeName>
        <fullName evidence="6">L-arginine:glycine amidinotransferase</fullName>
    </alternativeName>
    <alternativeName>
        <fullName evidence="2">Transamidinase</fullName>
    </alternativeName>
</protein>
<comment type="function">
    <text evidence="1">Catalyzes the biosynthesis of guanidinoacetate, the immediate precursor of creatine. Creatine plays a vital role in energy metabolism in muscle tissues. May play a role in embryonic and central nervous system development (By similarity).</text>
</comment>
<comment type="catalytic activity">
    <reaction evidence="2">
        <text>L-arginine + glycine = guanidinoacetate + L-ornithine</text>
        <dbReference type="Rhea" id="RHEA:13201"/>
        <dbReference type="ChEBI" id="CHEBI:32682"/>
        <dbReference type="ChEBI" id="CHEBI:46911"/>
        <dbReference type="ChEBI" id="CHEBI:57305"/>
        <dbReference type="ChEBI" id="CHEBI:57742"/>
        <dbReference type="EC" id="2.1.4.1"/>
    </reaction>
</comment>
<comment type="pathway">
    <text evidence="2">Amine and polyamine biosynthesis; creatine biosynthesis; creatine from L-arginine and glycine: step 1/2.</text>
</comment>
<comment type="subunit">
    <text evidence="2">Homodimer.</text>
</comment>
<comment type="subcellular location">
    <subcellularLocation>
        <location evidence="2">Mitochondrion inner membrane</location>
    </subcellularLocation>
</comment>
<comment type="tissue specificity">
    <text evidence="5">Ubiquitously expressed in adult tissues, with highest levels in muscle and intermediate levels in eye, heart, liver, stomach and testis. In stage 28 embryos, expression is higher in the dorsal and ventral parts of the trunk than in the head. In middle gastrulae, expression is highest around the yolk plug, while in stage 15 and tailbud stage embryos, expression is largely restricted to the region around the presumptive notochord and gut.</text>
</comment>
<comment type="developmental stage">
    <text evidence="5">Expressed during embryonic development from the mid-gastrula stage onwards.</text>
</comment>
<comment type="similarity">
    <text evidence="4">Belongs to the amidinotransferase family.</text>
</comment>
<dbReference type="EC" id="2.1.4.1" evidence="2"/>
<dbReference type="EMBL" id="AF187863">
    <property type="protein sequence ID" value="AAF31361.2"/>
    <property type="molecule type" value="mRNA"/>
</dbReference>
<dbReference type="EMBL" id="BC047973">
    <property type="protein sequence ID" value="AAH47973.1"/>
    <property type="molecule type" value="mRNA"/>
</dbReference>
<dbReference type="RefSeq" id="NP_001079699.1">
    <property type="nucleotide sequence ID" value="NM_001086230.1"/>
</dbReference>
<dbReference type="SMR" id="Q9IAJ6"/>
<dbReference type="DNASU" id="379386"/>
<dbReference type="GeneID" id="379386"/>
<dbReference type="KEGG" id="xla:379386"/>
<dbReference type="AGR" id="Xenbase:XB-GENE-974520"/>
<dbReference type="CTD" id="379386"/>
<dbReference type="Xenbase" id="XB-GENE-974520">
    <property type="gene designation" value="gatm.L"/>
</dbReference>
<dbReference type="OrthoDB" id="10264242at2759"/>
<dbReference type="BRENDA" id="2.1.4.1">
    <property type="organism ID" value="6725"/>
</dbReference>
<dbReference type="UniPathway" id="UPA00104">
    <property type="reaction ID" value="UER00579"/>
</dbReference>
<dbReference type="Proteomes" id="UP000186698">
    <property type="component" value="Chromosome 3L"/>
</dbReference>
<dbReference type="Bgee" id="379386">
    <property type="expression patterns" value="Expressed in gastrula and 12 other cell types or tissues"/>
</dbReference>
<dbReference type="GO" id="GO:0005743">
    <property type="term" value="C:mitochondrial inner membrane"/>
    <property type="evidence" value="ECO:0007669"/>
    <property type="project" value="UniProtKB-SubCell"/>
</dbReference>
<dbReference type="GO" id="GO:0005758">
    <property type="term" value="C:mitochondrial intermembrane space"/>
    <property type="evidence" value="ECO:0000318"/>
    <property type="project" value="GO_Central"/>
</dbReference>
<dbReference type="GO" id="GO:0015068">
    <property type="term" value="F:glycine amidinotransferase activity"/>
    <property type="evidence" value="ECO:0000250"/>
    <property type="project" value="UniProtKB"/>
</dbReference>
<dbReference type="GO" id="GO:0006601">
    <property type="term" value="P:creatine biosynthetic process"/>
    <property type="evidence" value="ECO:0000318"/>
    <property type="project" value="GO_Central"/>
</dbReference>
<dbReference type="CDD" id="cd21136">
    <property type="entry name" value="amidinotransferase_AGAT-like"/>
    <property type="match status" value="1"/>
</dbReference>
<dbReference type="FunFam" id="3.75.10.10:FF:000005">
    <property type="entry name" value="Glycine amidinotransferase, mitochondrial"/>
    <property type="match status" value="1"/>
</dbReference>
<dbReference type="Gene3D" id="3.75.10.10">
    <property type="entry name" value="L-arginine/glycine Amidinotransferase, Chain A"/>
    <property type="match status" value="1"/>
</dbReference>
<dbReference type="InterPro" id="IPR033195">
    <property type="entry name" value="AmidinoTrfase"/>
</dbReference>
<dbReference type="PANTHER" id="PTHR10488">
    <property type="entry name" value="GLYCINE AMIDINOTRANSFERASE, MITOCHONDRIAL"/>
    <property type="match status" value="1"/>
</dbReference>
<dbReference type="PANTHER" id="PTHR10488:SF1">
    <property type="entry name" value="GLYCINE AMIDINOTRANSFERASE, MITOCHONDRIAL"/>
    <property type="match status" value="1"/>
</dbReference>
<dbReference type="SUPFAM" id="SSF55909">
    <property type="entry name" value="Pentein"/>
    <property type="match status" value="1"/>
</dbReference>
<sequence>MLRVRCLRGGSRGAEAVHYIGSMLRKSFVGWVQRSFQSTQAAAVSEKPCAADEKVRDTAAQECPVCSYNEWDPLEEVIVGRPENANVPPFSVEVKANTYEKYWPFYQKHGGQSFPVDHVKKAIEEIEEMCKVLKHEGVIVQRPEVIDWSVKYKTPDFESTGMYAAMPRDILLVVGNEIIEAPMAWRARFFEYRAYRPLIKDYFRRGAKWTTAPKPTMADELYDQDYPIRTVEDRHKLAAMGKFVTTEFEPCFDAADFMRAGRDIFAQRSQVTNYLGIEWMRRHLAPDYKVHIISFKDPNPMHIDATFNIIGPGLVLSNPDRPCHQIELFKKAGWTVVTPPTPLIPDNHPLWMSSKWLSMNVLMLDEKRVMVDANETSIHKMFEKLGISTIKVNIRHANSLGGGFHCWTCDIRRRGTLQSYFR</sequence>
<reference evidence="7 8" key="1">
    <citation type="journal article" date="2001" name="Dev. Genes Evol.">
        <title>Expression of Xenopus L-arginine:glycine amidinotransferase (XAT) during early embryonic development.</title>
        <authorList>
            <person name="Zhao H."/>
            <person name="Cao Y."/>
            <person name="Grunz H."/>
        </authorList>
    </citation>
    <scope>NUCLEOTIDE SEQUENCE [MRNA]</scope>
    <scope>TISSUE SPECIFICITY</scope>
    <scope>DEVELOPMENTAL STAGE</scope>
    <source>
        <tissue evidence="8">Ectoderm</tissue>
    </source>
</reference>
<reference evidence="9" key="2">
    <citation type="submission" date="2003-03" db="EMBL/GenBank/DDBJ databases">
        <authorList>
            <consortium name="NIH - Xenopus Gene Collection (XGC) project"/>
        </authorList>
    </citation>
    <scope>NUCLEOTIDE SEQUENCE [LARGE SCALE MRNA]</scope>
    <source>
        <tissue evidence="9">Tail bud</tissue>
    </source>
</reference>
<proteinExistence type="evidence at transcript level"/>
<evidence type="ECO:0000250" key="1"/>
<evidence type="ECO:0000250" key="2">
    <source>
        <dbReference type="UniProtKB" id="P50440"/>
    </source>
</evidence>
<evidence type="ECO:0000250" key="3">
    <source>
        <dbReference type="UniProtKB" id="P50441"/>
    </source>
</evidence>
<evidence type="ECO:0000255" key="4"/>
<evidence type="ECO:0000269" key="5">
    <source>
    </source>
</evidence>
<evidence type="ECO:0000303" key="6">
    <source>
    </source>
</evidence>
<evidence type="ECO:0000305" key="7"/>
<evidence type="ECO:0000312" key="8">
    <source>
        <dbReference type="EMBL" id="AAF31361.2"/>
    </source>
</evidence>
<evidence type="ECO:0000312" key="9">
    <source>
        <dbReference type="EMBL" id="AAH47973.1"/>
    </source>
</evidence>
<evidence type="ECO:0000312" key="10">
    <source>
        <dbReference type="Xenbase" id="XB-GENE-974520"/>
    </source>
</evidence>
<organism>
    <name type="scientific">Xenopus laevis</name>
    <name type="common">African clawed frog</name>
    <dbReference type="NCBI Taxonomy" id="8355"/>
    <lineage>
        <taxon>Eukaryota</taxon>
        <taxon>Metazoa</taxon>
        <taxon>Chordata</taxon>
        <taxon>Craniata</taxon>
        <taxon>Vertebrata</taxon>
        <taxon>Euteleostomi</taxon>
        <taxon>Amphibia</taxon>
        <taxon>Batrachia</taxon>
        <taxon>Anura</taxon>
        <taxon>Pipoidea</taxon>
        <taxon>Pipidae</taxon>
        <taxon>Xenopodinae</taxon>
        <taxon>Xenopus</taxon>
        <taxon>Xenopus</taxon>
    </lineage>
</organism>
<accession>Q9IAJ6</accession>